<dbReference type="EC" id="2.1.1.-" evidence="1"/>
<dbReference type="EMBL" id="U97567">
    <property type="protein sequence ID" value="AAB66376.1"/>
    <property type="molecule type" value="Genomic_DNA"/>
</dbReference>
<dbReference type="EMBL" id="AE000511">
    <property type="protein sequence ID" value="AAD08114.1"/>
    <property type="molecule type" value="Genomic_DNA"/>
</dbReference>
<dbReference type="PIR" id="D64653">
    <property type="entry name" value="D64653"/>
</dbReference>
<dbReference type="RefSeq" id="NP_207859.1">
    <property type="nucleotide sequence ID" value="NC_000915.1"/>
</dbReference>
<dbReference type="SMR" id="O07678"/>
<dbReference type="DIP" id="DIP-3670N"/>
<dbReference type="FunCoup" id="O07678">
    <property type="interactions" value="313"/>
</dbReference>
<dbReference type="IntAct" id="O07678">
    <property type="interactions" value="2"/>
</dbReference>
<dbReference type="MINT" id="O07678"/>
<dbReference type="STRING" id="85962.HP_1068"/>
<dbReference type="PaxDb" id="85962-C694_05520"/>
<dbReference type="EnsemblBacteria" id="AAD08114">
    <property type="protein sequence ID" value="AAD08114"/>
    <property type="gene ID" value="HP_1068"/>
</dbReference>
<dbReference type="KEGG" id="heo:C694_05520"/>
<dbReference type="KEGG" id="hpy:HP_1068"/>
<dbReference type="PATRIC" id="fig|85962.47.peg.1147"/>
<dbReference type="eggNOG" id="COG2264">
    <property type="taxonomic scope" value="Bacteria"/>
</dbReference>
<dbReference type="InParanoid" id="O07678"/>
<dbReference type="OrthoDB" id="9785995at2"/>
<dbReference type="PhylomeDB" id="O07678"/>
<dbReference type="Proteomes" id="UP000000429">
    <property type="component" value="Chromosome"/>
</dbReference>
<dbReference type="GO" id="GO:0005737">
    <property type="term" value="C:cytoplasm"/>
    <property type="evidence" value="ECO:0007669"/>
    <property type="project" value="UniProtKB-SubCell"/>
</dbReference>
<dbReference type="GO" id="GO:0008276">
    <property type="term" value="F:protein methyltransferase activity"/>
    <property type="evidence" value="ECO:0000318"/>
    <property type="project" value="GO_Central"/>
</dbReference>
<dbReference type="GO" id="GO:0016279">
    <property type="term" value="F:protein-lysine N-methyltransferase activity"/>
    <property type="evidence" value="ECO:0007669"/>
    <property type="project" value="RHEA"/>
</dbReference>
<dbReference type="GO" id="GO:0032259">
    <property type="term" value="P:methylation"/>
    <property type="evidence" value="ECO:0007669"/>
    <property type="project" value="UniProtKB-KW"/>
</dbReference>
<dbReference type="CDD" id="cd02440">
    <property type="entry name" value="AdoMet_MTases"/>
    <property type="match status" value="1"/>
</dbReference>
<dbReference type="Gene3D" id="3.40.50.150">
    <property type="entry name" value="Vaccinia Virus protein VP39"/>
    <property type="match status" value="1"/>
</dbReference>
<dbReference type="HAMAP" id="MF_00735">
    <property type="entry name" value="Methyltr_PrmA"/>
    <property type="match status" value="1"/>
</dbReference>
<dbReference type="InterPro" id="IPR050078">
    <property type="entry name" value="Ribosomal_L11_MeTrfase_PrmA"/>
</dbReference>
<dbReference type="InterPro" id="IPR004498">
    <property type="entry name" value="Ribosomal_PrmA_MeTrfase"/>
</dbReference>
<dbReference type="InterPro" id="IPR029063">
    <property type="entry name" value="SAM-dependent_MTases_sf"/>
</dbReference>
<dbReference type="NCBIfam" id="TIGR00406">
    <property type="entry name" value="prmA"/>
    <property type="match status" value="1"/>
</dbReference>
<dbReference type="PANTHER" id="PTHR43648">
    <property type="entry name" value="ELECTRON TRANSFER FLAVOPROTEIN BETA SUBUNIT LYSINE METHYLTRANSFERASE"/>
    <property type="match status" value="1"/>
</dbReference>
<dbReference type="PANTHER" id="PTHR43648:SF1">
    <property type="entry name" value="ELECTRON TRANSFER FLAVOPROTEIN BETA SUBUNIT LYSINE METHYLTRANSFERASE"/>
    <property type="match status" value="1"/>
</dbReference>
<dbReference type="Pfam" id="PF06325">
    <property type="entry name" value="PrmA"/>
    <property type="match status" value="1"/>
</dbReference>
<dbReference type="PIRSF" id="PIRSF000401">
    <property type="entry name" value="RPL11_MTase"/>
    <property type="match status" value="1"/>
</dbReference>
<dbReference type="SUPFAM" id="SSF53335">
    <property type="entry name" value="S-adenosyl-L-methionine-dependent methyltransferases"/>
    <property type="match status" value="1"/>
</dbReference>
<feature type="chain" id="PRO_0000192269" description="Ribosomal protein L11 methyltransferase">
    <location>
        <begin position="1"/>
        <end position="333"/>
    </location>
</feature>
<feature type="binding site" evidence="1">
    <location>
        <position position="181"/>
    </location>
    <ligand>
        <name>S-adenosyl-L-methionine</name>
        <dbReference type="ChEBI" id="CHEBI:59789"/>
    </ligand>
</feature>
<feature type="binding site" evidence="1">
    <location>
        <position position="202"/>
    </location>
    <ligand>
        <name>S-adenosyl-L-methionine</name>
        <dbReference type="ChEBI" id="CHEBI:59789"/>
    </ligand>
</feature>
<feature type="binding site" evidence="1">
    <location>
        <position position="224"/>
    </location>
    <ligand>
        <name>S-adenosyl-L-methionine</name>
        <dbReference type="ChEBI" id="CHEBI:59789"/>
    </ligand>
</feature>
<feature type="binding site" evidence="1">
    <location>
        <position position="268"/>
    </location>
    <ligand>
        <name>S-adenosyl-L-methionine</name>
        <dbReference type="ChEBI" id="CHEBI:59789"/>
    </ligand>
</feature>
<feature type="sequence variant" description="In strain: NCTC 11638.">
    <original>S</original>
    <variation>N</variation>
    <location>
        <position position="22"/>
    </location>
</feature>
<feature type="sequence variant" description="In strain: NCTC 11638.">
    <original>A</original>
    <variation>T</variation>
    <location>
        <position position="27"/>
    </location>
</feature>
<feature type="sequence variant" description="In strain: NCTC 11638.">
    <original>G</original>
    <variation>E</variation>
    <location>
        <position position="50"/>
    </location>
</feature>
<feature type="sequence variant" description="In strain: NCTC 11638.">
    <original>A</original>
    <variation>T</variation>
    <location>
        <position position="61"/>
    </location>
</feature>
<feature type="sequence variant" description="In strain: NCTC 11638.">
    <original>P</original>
    <variation>S</variation>
    <location>
        <position position="65"/>
    </location>
</feature>
<feature type="sequence variant" description="In strain: NCTC 11638.">
    <original>P</original>
    <variation>S</variation>
    <location>
        <position position="78"/>
    </location>
</feature>
<feature type="sequence variant" description="In strain: NCTC 11638.">
    <original>QKD</original>
    <variation>EEN</variation>
    <location>
        <begin position="90"/>
        <end position="92"/>
    </location>
</feature>
<feature type="sequence variant" description="In strain: NCTC 11638.">
    <original>P</original>
    <variation>L</variation>
    <location>
        <position position="99"/>
    </location>
</feature>
<feature type="sequence variant" description="In strain: NCTC 11638.">
    <original>N</original>
    <variation>S</variation>
    <location>
        <position position="107"/>
    </location>
</feature>
<feature type="sequence variant" description="In strain: NCTC 11638.">
    <original>K</original>
    <variation>Q</variation>
    <location>
        <position position="109"/>
    </location>
</feature>
<feature type="sequence variant" description="In strain: NCTC 11638.">
    <original>T</original>
    <variation>A</variation>
    <location>
        <position position="144"/>
    </location>
</feature>
<feature type="sequence variant" description="In strain: NCTC 11638.">
    <original>DI</original>
    <variation>NL</variation>
    <location>
        <begin position="190"/>
        <end position="191"/>
    </location>
</feature>
<feature type="sequence variant" description="In strain: NCTC 11638.">
    <original>I</original>
    <variation>V</variation>
    <location>
        <position position="251"/>
    </location>
</feature>
<feature type="sequence variant" description="In strain: NCTC 11638.">
    <original>Q</original>
    <variation>K</variation>
    <location>
        <position position="317"/>
    </location>
</feature>
<sequence>MLKPMYYEFFFIFPKERELFESFLLDATHLALEESSLENLKAFDDKETIGFISQSNWHYFATHDPLKKDLKENLKEKPPHLKNFVILRSQKDLNNSLIPALEAFCLNLKQNLQSEFDFFYLSRNLASKDWLEAYKQAILPVQCTKFYIHPSWHQKPSHVVTNDCIMIDPALAFGSGHHESTSMCLELLSDIDLKRKNALDVGCGSGILSIALKKQGVSALVACDTDSLAVEETLKNFSLNQIPLLVQDKVIYGSTQKIEGRFDVIVANLVADVIKSLYSEFVRLCNHTLILSGILETHLNSVLQIYYNGFEVLEQRQRNEWVALKLLKKQPIN</sequence>
<accession>O07678</accession>
<proteinExistence type="inferred from homology"/>
<name>PRMA_HELPY</name>
<keyword id="KW-0963">Cytoplasm</keyword>
<keyword id="KW-0489">Methyltransferase</keyword>
<keyword id="KW-1185">Reference proteome</keyword>
<keyword id="KW-0949">S-adenosyl-L-methionine</keyword>
<keyword id="KW-0808">Transferase</keyword>
<protein>
    <recommendedName>
        <fullName evidence="1">Ribosomal protein L11 methyltransferase</fullName>
        <shortName evidence="1">L11 Mtase</shortName>
        <ecNumber evidence="1">2.1.1.-</ecNumber>
    </recommendedName>
</protein>
<gene>
    <name evidence="1" type="primary">prmA</name>
    <name type="synonym">hsm</name>
    <name type="ordered locus">HP_1068</name>
</gene>
<reference key="1">
    <citation type="journal article" date="1997" name="J. Bacteriol.">
        <title>Identification and characterization of an operon of Helicobacter pylori that is involved in motility and stress adaptation.</title>
        <authorList>
            <person name="Beier D."/>
            <person name="Spohn G."/>
            <person name="Rappuoli R."/>
            <person name="Scarlato V."/>
        </authorList>
    </citation>
    <scope>NUCLEOTIDE SEQUENCE [GENOMIC DNA]</scope>
    <source>
        <strain>DSM 4867 / CCUG 17874 / NCTC 11638</strain>
    </source>
</reference>
<reference key="2">
    <citation type="journal article" date="1997" name="Nature">
        <title>The complete genome sequence of the gastric pathogen Helicobacter pylori.</title>
        <authorList>
            <person name="Tomb J.-F."/>
            <person name="White O."/>
            <person name="Kerlavage A.R."/>
            <person name="Clayton R.A."/>
            <person name="Sutton G.G."/>
            <person name="Fleischmann R.D."/>
            <person name="Ketchum K.A."/>
            <person name="Klenk H.-P."/>
            <person name="Gill S.R."/>
            <person name="Dougherty B.A."/>
            <person name="Nelson K.E."/>
            <person name="Quackenbush J."/>
            <person name="Zhou L."/>
            <person name="Kirkness E.F."/>
            <person name="Peterson S.N."/>
            <person name="Loftus B.J."/>
            <person name="Richardson D.L."/>
            <person name="Dodson R.J."/>
            <person name="Khalak H.G."/>
            <person name="Glodek A."/>
            <person name="McKenney K."/>
            <person name="FitzGerald L.M."/>
            <person name="Lee N."/>
            <person name="Adams M.D."/>
            <person name="Hickey E.K."/>
            <person name="Berg D.E."/>
            <person name="Gocayne J.D."/>
            <person name="Utterback T.R."/>
            <person name="Peterson J.D."/>
            <person name="Kelley J.M."/>
            <person name="Cotton M.D."/>
            <person name="Weidman J.F."/>
            <person name="Fujii C."/>
            <person name="Bowman C."/>
            <person name="Watthey L."/>
            <person name="Wallin E."/>
            <person name="Hayes W.S."/>
            <person name="Borodovsky M."/>
            <person name="Karp P.D."/>
            <person name="Smith H.O."/>
            <person name="Fraser C.M."/>
            <person name="Venter J.C."/>
        </authorList>
    </citation>
    <scope>NUCLEOTIDE SEQUENCE [LARGE SCALE GENOMIC DNA]</scope>
    <source>
        <strain>ATCC 700392 / 26695</strain>
    </source>
</reference>
<organism>
    <name type="scientific">Helicobacter pylori (strain ATCC 700392 / 26695)</name>
    <name type="common">Campylobacter pylori</name>
    <dbReference type="NCBI Taxonomy" id="85962"/>
    <lineage>
        <taxon>Bacteria</taxon>
        <taxon>Pseudomonadati</taxon>
        <taxon>Campylobacterota</taxon>
        <taxon>Epsilonproteobacteria</taxon>
        <taxon>Campylobacterales</taxon>
        <taxon>Helicobacteraceae</taxon>
        <taxon>Helicobacter</taxon>
    </lineage>
</organism>
<evidence type="ECO:0000255" key="1">
    <source>
        <dbReference type="HAMAP-Rule" id="MF_00735"/>
    </source>
</evidence>
<evidence type="ECO:0000305" key="2"/>
<comment type="function">
    <text evidence="1">Methylates ribosomal protein L11.</text>
</comment>
<comment type="catalytic activity">
    <reaction evidence="1">
        <text>L-lysyl-[protein] + 3 S-adenosyl-L-methionine = N(6),N(6),N(6)-trimethyl-L-lysyl-[protein] + 3 S-adenosyl-L-homocysteine + 3 H(+)</text>
        <dbReference type="Rhea" id="RHEA:54192"/>
        <dbReference type="Rhea" id="RHEA-COMP:9752"/>
        <dbReference type="Rhea" id="RHEA-COMP:13826"/>
        <dbReference type="ChEBI" id="CHEBI:15378"/>
        <dbReference type="ChEBI" id="CHEBI:29969"/>
        <dbReference type="ChEBI" id="CHEBI:57856"/>
        <dbReference type="ChEBI" id="CHEBI:59789"/>
        <dbReference type="ChEBI" id="CHEBI:61961"/>
    </reaction>
</comment>
<comment type="subcellular location">
    <subcellularLocation>
        <location evidence="1">Cytoplasm</location>
    </subcellularLocation>
</comment>
<comment type="similarity">
    <text evidence="1 2">Belongs to the methyltransferase superfamily. PrmA family.</text>
</comment>